<organism>
    <name type="scientific">Trypanosoma cruzi (strain CL Brener)</name>
    <dbReference type="NCBI Taxonomy" id="353153"/>
    <lineage>
        <taxon>Eukaryota</taxon>
        <taxon>Discoba</taxon>
        <taxon>Euglenozoa</taxon>
        <taxon>Kinetoplastea</taxon>
        <taxon>Metakinetoplastina</taxon>
        <taxon>Trypanosomatida</taxon>
        <taxon>Trypanosomatidae</taxon>
        <taxon>Trypanosoma</taxon>
        <taxon>Schizotrypanum</taxon>
    </lineage>
</organism>
<sequence length="748" mass="82466">MRVGCCLLLKPIRQRLCTASISSRHIMRWCATSSSNINSTETAAKMPDDDVSGSLSAPSLLKYKIEPSTATMGAPRPPHDDDRAFCTLASFPPSHIRNFAVVAHVDHGKTTLSDAILRRTGVLSGSQVGTYTDRLLVERERGITIKAQTCSIFVVRDGEEFLLNLIDTPGHVDFQYEVSRSLSASDAALLLVDAAQGIEAQTMAHFHMALDRGLTILPVLTKMDAVLSDAPVDRALQDLEDSTGLLRREVLFTSAKEQVGIEALLHAIIERVPPPTGLLGLSDLQQLPPLLPGSAERAAMEEKMVPLRALLFDSWTSECGGGLRRPAPRGGEKVNSGNDNDSNLICLVRIIDGTLTAKTVVTFYQSQRRCEALEVGIIHPELRPTAALTAGMVGYVVFSRVRGEEFFVGETLYTLPTRKFAREDIVPVPGFRRVQPVVFAGFYPDEGEYITQLREAVEKLRVNEPAVTMEPLDCPALGSGLQLGFLGMLHMQVFQERLLAEFGQRVLVTPPLVQYKYREAGSDEEEPLKPLTVHTWKWIHEGAACYLEPYVTATIITRREHFQAIDSEALRRFRGEQLDMRVLDDARVLVRYKMPLADLARGFFAVVKSLSHGYASLDYGDPVYEEADLVKVDVLVQKSRISALSVICPRSEAPSIGKRIVSSLKSNLTRTAVDIPLQAMVGSKIVARETVKAYRKDVTAKIHAGDISRKQKKWNDQKKGKERMARRTVGAVTLDQSILAAAMGAISL</sequence>
<evidence type="ECO:0000255" key="1">
    <source>
        <dbReference type="HAMAP-Rule" id="MF_03137"/>
    </source>
</evidence>
<evidence type="ECO:0000305" key="2"/>
<name>GUF11_TRYCC</name>
<feature type="transit peptide" description="Mitochondrion" evidence="1">
    <location>
        <begin position="1"/>
        <end position="29"/>
    </location>
</feature>
<feature type="chain" id="PRO_0000402861" description="Translation factor GUF1 homolog 1, mitochondrial">
    <location>
        <begin position="30"/>
        <end position="748"/>
    </location>
</feature>
<feature type="domain" description="tr-type G">
    <location>
        <begin position="94"/>
        <end position="276"/>
    </location>
</feature>
<feature type="binding site" evidence="1">
    <location>
        <begin position="103"/>
        <end position="110"/>
    </location>
    <ligand>
        <name>GTP</name>
        <dbReference type="ChEBI" id="CHEBI:37565"/>
    </ligand>
</feature>
<feature type="binding site" evidence="1">
    <location>
        <begin position="167"/>
        <end position="171"/>
    </location>
    <ligand>
        <name>GTP</name>
        <dbReference type="ChEBI" id="CHEBI:37565"/>
    </ligand>
</feature>
<feature type="binding site" evidence="1">
    <location>
        <begin position="221"/>
        <end position="224"/>
    </location>
    <ligand>
        <name>GTP</name>
        <dbReference type="ChEBI" id="CHEBI:37565"/>
    </ligand>
</feature>
<protein>
    <recommendedName>
        <fullName>Translation factor GUF1 homolog 1, mitochondrial</fullName>
        <ecNumber>3.6.5.-</ecNumber>
    </recommendedName>
    <alternativeName>
        <fullName evidence="1">Elongation factor 4 homolog 1</fullName>
        <shortName evidence="1">EF-4 1</shortName>
    </alternativeName>
    <alternativeName>
        <fullName evidence="1">GTPase GUF1 homolog 1</fullName>
    </alternativeName>
    <alternativeName>
        <fullName evidence="1">Ribosomal back-translocase 1</fullName>
    </alternativeName>
</protein>
<keyword id="KW-0342">GTP-binding</keyword>
<keyword id="KW-0378">Hydrolase</keyword>
<keyword id="KW-0472">Membrane</keyword>
<keyword id="KW-0496">Mitochondrion</keyword>
<keyword id="KW-0999">Mitochondrion inner membrane</keyword>
<keyword id="KW-0547">Nucleotide-binding</keyword>
<keyword id="KW-0648">Protein biosynthesis</keyword>
<keyword id="KW-1185">Reference proteome</keyword>
<keyword id="KW-0809">Transit peptide</keyword>
<accession>Q4DKF7</accession>
<proteinExistence type="inferred from homology"/>
<comment type="function">
    <text evidence="1">Promotes mitochondrial protein synthesis. May act as a fidelity factor of the translation reaction, by catalyzing a one-codon backward translocation of tRNAs on improperly translocated ribosomes. Binds to mitochondrial ribosomes in a GTP-dependent manner.</text>
</comment>
<comment type="catalytic activity">
    <reaction evidence="1">
        <text>GTP + H2O = GDP + phosphate + H(+)</text>
        <dbReference type="Rhea" id="RHEA:19669"/>
        <dbReference type="ChEBI" id="CHEBI:15377"/>
        <dbReference type="ChEBI" id="CHEBI:15378"/>
        <dbReference type="ChEBI" id="CHEBI:37565"/>
        <dbReference type="ChEBI" id="CHEBI:43474"/>
        <dbReference type="ChEBI" id="CHEBI:58189"/>
    </reaction>
</comment>
<comment type="subcellular location">
    <subcellularLocation>
        <location evidence="1">Mitochondrion inner membrane</location>
        <topology evidence="1">Peripheral membrane protein</topology>
        <orientation evidence="1">Matrix side</orientation>
    </subcellularLocation>
</comment>
<comment type="similarity">
    <text evidence="2">Belongs to the TRAFAC class translation factor GTPase superfamily. Classic translation factor GTPase family. LepA subfamily.</text>
</comment>
<dbReference type="EC" id="3.6.5.-"/>
<dbReference type="EMBL" id="AAHK01000385">
    <property type="protein sequence ID" value="EAN93010.1"/>
    <property type="molecule type" value="Genomic_DNA"/>
</dbReference>
<dbReference type="RefSeq" id="XP_814861.1">
    <property type="nucleotide sequence ID" value="XM_809768.1"/>
</dbReference>
<dbReference type="SMR" id="Q4DKF7"/>
<dbReference type="FunCoup" id="Q4DKF7">
    <property type="interactions" value="339"/>
</dbReference>
<dbReference type="STRING" id="353153.Q4DKF7"/>
<dbReference type="PaxDb" id="353153-Q4DKF7"/>
<dbReference type="EnsemblProtists" id="EAN93010">
    <property type="protein sequence ID" value="EAN93010"/>
    <property type="gene ID" value="Tc00.1047053503697.90"/>
</dbReference>
<dbReference type="GeneID" id="3546474"/>
<dbReference type="KEGG" id="tcr:503697.90"/>
<dbReference type="eggNOG" id="KOG0462">
    <property type="taxonomic scope" value="Eukaryota"/>
</dbReference>
<dbReference type="InParanoid" id="Q4DKF7"/>
<dbReference type="OMA" id="EYSFVGY"/>
<dbReference type="Proteomes" id="UP000002296">
    <property type="component" value="Unassembled WGS sequence"/>
</dbReference>
<dbReference type="GO" id="GO:0005743">
    <property type="term" value="C:mitochondrial inner membrane"/>
    <property type="evidence" value="ECO:0007669"/>
    <property type="project" value="UniProtKB-SubCell"/>
</dbReference>
<dbReference type="GO" id="GO:0005759">
    <property type="term" value="C:mitochondrial matrix"/>
    <property type="evidence" value="ECO:0007669"/>
    <property type="project" value="UniProtKB-UniRule"/>
</dbReference>
<dbReference type="GO" id="GO:0005525">
    <property type="term" value="F:GTP binding"/>
    <property type="evidence" value="ECO:0007669"/>
    <property type="project" value="UniProtKB-UniRule"/>
</dbReference>
<dbReference type="GO" id="GO:0003924">
    <property type="term" value="F:GTPase activity"/>
    <property type="evidence" value="ECO:0007669"/>
    <property type="project" value="UniProtKB-UniRule"/>
</dbReference>
<dbReference type="GO" id="GO:0097177">
    <property type="term" value="F:mitochondrial ribosome binding"/>
    <property type="evidence" value="ECO:0007669"/>
    <property type="project" value="TreeGrafter"/>
</dbReference>
<dbReference type="GO" id="GO:0045727">
    <property type="term" value="P:positive regulation of translation"/>
    <property type="evidence" value="ECO:0007669"/>
    <property type="project" value="UniProtKB-UniRule"/>
</dbReference>
<dbReference type="GO" id="GO:0006412">
    <property type="term" value="P:translation"/>
    <property type="evidence" value="ECO:0007669"/>
    <property type="project" value="UniProtKB-KW"/>
</dbReference>
<dbReference type="CDD" id="cd01890">
    <property type="entry name" value="LepA"/>
    <property type="match status" value="1"/>
</dbReference>
<dbReference type="CDD" id="cd03709">
    <property type="entry name" value="lepA_C"/>
    <property type="match status" value="1"/>
</dbReference>
<dbReference type="FunFam" id="3.30.70.2570:FF:000001">
    <property type="entry name" value="Translation factor GUF1, mitochondrial"/>
    <property type="match status" value="1"/>
</dbReference>
<dbReference type="Gene3D" id="3.30.70.240">
    <property type="match status" value="1"/>
</dbReference>
<dbReference type="Gene3D" id="3.30.70.2570">
    <property type="entry name" value="Elongation factor 4, C-terminal domain"/>
    <property type="match status" value="1"/>
</dbReference>
<dbReference type="Gene3D" id="3.30.70.870">
    <property type="entry name" value="Elongation Factor G (Translational Gtpase), domain 3"/>
    <property type="match status" value="1"/>
</dbReference>
<dbReference type="Gene3D" id="3.40.50.300">
    <property type="entry name" value="P-loop containing nucleotide triphosphate hydrolases"/>
    <property type="match status" value="1"/>
</dbReference>
<dbReference type="Gene3D" id="2.40.30.10">
    <property type="entry name" value="Translation factors"/>
    <property type="match status" value="1"/>
</dbReference>
<dbReference type="HAMAP" id="MF_00071">
    <property type="entry name" value="LepA"/>
    <property type="match status" value="1"/>
</dbReference>
<dbReference type="InterPro" id="IPR006297">
    <property type="entry name" value="EF-4"/>
</dbReference>
<dbReference type="InterPro" id="IPR035647">
    <property type="entry name" value="EFG_III/V"/>
</dbReference>
<dbReference type="InterPro" id="IPR000640">
    <property type="entry name" value="EFG_V-like"/>
</dbReference>
<dbReference type="InterPro" id="IPR038363">
    <property type="entry name" value="LepA_C_sf"/>
</dbReference>
<dbReference type="InterPro" id="IPR013842">
    <property type="entry name" value="LepA_CTD"/>
</dbReference>
<dbReference type="InterPro" id="IPR035654">
    <property type="entry name" value="LepA_IV"/>
</dbReference>
<dbReference type="InterPro" id="IPR027417">
    <property type="entry name" value="P-loop_NTPase"/>
</dbReference>
<dbReference type="InterPro" id="IPR005225">
    <property type="entry name" value="Small_GTP-bd"/>
</dbReference>
<dbReference type="InterPro" id="IPR000795">
    <property type="entry name" value="T_Tr_GTP-bd_dom"/>
</dbReference>
<dbReference type="InterPro" id="IPR009000">
    <property type="entry name" value="Transl_B-barrel_sf"/>
</dbReference>
<dbReference type="NCBIfam" id="TIGR00231">
    <property type="entry name" value="small_GTP"/>
    <property type="match status" value="1"/>
</dbReference>
<dbReference type="PANTHER" id="PTHR43512:SF7">
    <property type="entry name" value="TRANSLATION FACTOR GUF1, MITOCHONDRIAL"/>
    <property type="match status" value="1"/>
</dbReference>
<dbReference type="PANTHER" id="PTHR43512">
    <property type="entry name" value="TRANSLATION FACTOR GUF1-RELATED"/>
    <property type="match status" value="1"/>
</dbReference>
<dbReference type="Pfam" id="PF00679">
    <property type="entry name" value="EFG_C"/>
    <property type="match status" value="1"/>
</dbReference>
<dbReference type="Pfam" id="PF00009">
    <property type="entry name" value="GTP_EFTU"/>
    <property type="match status" value="1"/>
</dbReference>
<dbReference type="Pfam" id="PF06421">
    <property type="entry name" value="LepA_C"/>
    <property type="match status" value="1"/>
</dbReference>
<dbReference type="PRINTS" id="PR00315">
    <property type="entry name" value="ELONGATNFCT"/>
</dbReference>
<dbReference type="SUPFAM" id="SSF54980">
    <property type="entry name" value="EF-G C-terminal domain-like"/>
    <property type="match status" value="2"/>
</dbReference>
<dbReference type="SUPFAM" id="SSF52540">
    <property type="entry name" value="P-loop containing nucleoside triphosphate hydrolases"/>
    <property type="match status" value="1"/>
</dbReference>
<dbReference type="SUPFAM" id="SSF50447">
    <property type="entry name" value="Translation proteins"/>
    <property type="match status" value="1"/>
</dbReference>
<dbReference type="PROSITE" id="PS00301">
    <property type="entry name" value="G_TR_1"/>
    <property type="match status" value="1"/>
</dbReference>
<dbReference type="PROSITE" id="PS51722">
    <property type="entry name" value="G_TR_2"/>
    <property type="match status" value="1"/>
</dbReference>
<reference key="1">
    <citation type="journal article" date="2005" name="Science">
        <title>The genome sequence of Trypanosoma cruzi, etiologic agent of Chagas disease.</title>
        <authorList>
            <person name="El-Sayed N.M.A."/>
            <person name="Myler P.J."/>
            <person name="Bartholomeu D.C."/>
            <person name="Nilsson D."/>
            <person name="Aggarwal G."/>
            <person name="Tran A.-N."/>
            <person name="Ghedin E."/>
            <person name="Worthey E.A."/>
            <person name="Delcher A.L."/>
            <person name="Blandin G."/>
            <person name="Westenberger S.J."/>
            <person name="Caler E."/>
            <person name="Cerqueira G.C."/>
            <person name="Branche C."/>
            <person name="Haas B."/>
            <person name="Anupama A."/>
            <person name="Arner E."/>
            <person name="Aslund L."/>
            <person name="Attipoe P."/>
            <person name="Bontempi E."/>
            <person name="Bringaud F."/>
            <person name="Burton P."/>
            <person name="Cadag E."/>
            <person name="Campbell D.A."/>
            <person name="Carrington M."/>
            <person name="Crabtree J."/>
            <person name="Darban H."/>
            <person name="da Silveira J.F."/>
            <person name="de Jong P."/>
            <person name="Edwards K."/>
            <person name="Englund P.T."/>
            <person name="Fazelina G."/>
            <person name="Feldblyum T."/>
            <person name="Ferella M."/>
            <person name="Frasch A.C."/>
            <person name="Gull K."/>
            <person name="Horn D."/>
            <person name="Hou L."/>
            <person name="Huang Y."/>
            <person name="Kindlund E."/>
            <person name="Klingbeil M."/>
            <person name="Kluge S."/>
            <person name="Koo H."/>
            <person name="Lacerda D."/>
            <person name="Levin M.J."/>
            <person name="Lorenzi H."/>
            <person name="Louie T."/>
            <person name="Machado C.R."/>
            <person name="McCulloch R."/>
            <person name="McKenna A."/>
            <person name="Mizuno Y."/>
            <person name="Mottram J.C."/>
            <person name="Nelson S."/>
            <person name="Ochaya S."/>
            <person name="Osoegawa K."/>
            <person name="Pai G."/>
            <person name="Parsons M."/>
            <person name="Pentony M."/>
            <person name="Pettersson U."/>
            <person name="Pop M."/>
            <person name="Ramirez J.L."/>
            <person name="Rinta J."/>
            <person name="Robertson L."/>
            <person name="Salzberg S.L."/>
            <person name="Sanchez D.O."/>
            <person name="Seyler A."/>
            <person name="Sharma R."/>
            <person name="Shetty J."/>
            <person name="Simpson A.J."/>
            <person name="Sisk E."/>
            <person name="Tammi M.T."/>
            <person name="Tarleton R."/>
            <person name="Teixeira S."/>
            <person name="Van Aken S."/>
            <person name="Vogt C."/>
            <person name="Ward P.N."/>
            <person name="Wickstead B."/>
            <person name="Wortman J."/>
            <person name="White O."/>
            <person name="Fraser C.M."/>
            <person name="Stuart K.D."/>
            <person name="Andersson B."/>
        </authorList>
    </citation>
    <scope>NUCLEOTIDE SEQUENCE [LARGE SCALE GENOMIC DNA]</scope>
    <source>
        <strain>CL Brener</strain>
    </source>
</reference>
<gene>
    <name type="ORF">Tc00.1047053503697.90</name>
</gene>